<accession>C1EPZ5</accession>
<sequence length="240" mass="25704">MKMMDANEIISFIQKSEKKTPVKVYIKGDLKEVTFPETVQAFVNKKSGVLFGEWSEIKTILDENSKYIVDYVVENDRRNSAIPMLDLKGIKARIEPGAIIRDHVEIGDNAVIMMNATINIGAVIGEGSMIDMNAVLGGRATVGKNCHVGAGAVLAGVIEPPSAKPVIVEDDVVIGANVVVLEGVTVGKGAVVAAGAVVTEDVPPYTVVAGTPARVIKEIDEKTKAKTEIKQELRQLNPEK</sequence>
<proteinExistence type="inferred from homology"/>
<evidence type="ECO:0000255" key="1">
    <source>
        <dbReference type="HAMAP-Rule" id="MF_01691"/>
    </source>
</evidence>
<dbReference type="EC" id="2.3.1.89" evidence="1"/>
<dbReference type="EMBL" id="CP001407">
    <property type="protein sequence ID" value="ACO26656.1"/>
    <property type="molecule type" value="Genomic_DNA"/>
</dbReference>
<dbReference type="SMR" id="C1EPZ5"/>
<dbReference type="KEGG" id="bcx:BCA_4086"/>
<dbReference type="PATRIC" id="fig|572264.18.peg.4039"/>
<dbReference type="UniPathway" id="UPA00034">
    <property type="reaction ID" value="UER00022"/>
</dbReference>
<dbReference type="Proteomes" id="UP000002210">
    <property type="component" value="Chromosome"/>
</dbReference>
<dbReference type="GO" id="GO:0047200">
    <property type="term" value="F:tetrahydrodipicolinate N-acetyltransferase activity"/>
    <property type="evidence" value="ECO:0007669"/>
    <property type="project" value="UniProtKB-EC"/>
</dbReference>
<dbReference type="GO" id="GO:0019877">
    <property type="term" value="P:diaminopimelate biosynthetic process"/>
    <property type="evidence" value="ECO:0007669"/>
    <property type="project" value="UniProtKB-UniRule"/>
</dbReference>
<dbReference type="GO" id="GO:0009089">
    <property type="term" value="P:lysine biosynthetic process via diaminopimelate"/>
    <property type="evidence" value="ECO:0007669"/>
    <property type="project" value="UniProtKB-UniRule"/>
</dbReference>
<dbReference type="CDD" id="cd03350">
    <property type="entry name" value="LbH_THP_succinylT"/>
    <property type="match status" value="1"/>
</dbReference>
<dbReference type="Gene3D" id="2.160.10.10">
    <property type="entry name" value="Hexapeptide repeat proteins"/>
    <property type="match status" value="1"/>
</dbReference>
<dbReference type="Gene3D" id="3.30.70.250">
    <property type="entry name" value="Malonyl-CoA ACP transacylase, ACP-binding"/>
    <property type="match status" value="1"/>
</dbReference>
<dbReference type="HAMAP" id="MF_01691">
    <property type="entry name" value="DapH"/>
    <property type="match status" value="1"/>
</dbReference>
<dbReference type="InterPro" id="IPR019873">
    <property type="entry name" value="DapH"/>
</dbReference>
<dbReference type="InterPro" id="IPR013710">
    <property type="entry name" value="DapH_N"/>
</dbReference>
<dbReference type="InterPro" id="IPR001451">
    <property type="entry name" value="Hexapep"/>
</dbReference>
<dbReference type="InterPro" id="IPR018357">
    <property type="entry name" value="Hexapep_transf_CS"/>
</dbReference>
<dbReference type="InterPro" id="IPR050179">
    <property type="entry name" value="Trans_hexapeptide_repeat"/>
</dbReference>
<dbReference type="InterPro" id="IPR011004">
    <property type="entry name" value="Trimer_LpxA-like_sf"/>
</dbReference>
<dbReference type="NCBIfam" id="TIGR03532">
    <property type="entry name" value="DapD_Ac"/>
    <property type="match status" value="1"/>
</dbReference>
<dbReference type="PANTHER" id="PTHR43300:SF10">
    <property type="entry name" value="2,3,4,5-TETRAHYDROPYRIDINE-2,6-DICARBOXYLATE N-ACETYLTRANSFERASE"/>
    <property type="match status" value="1"/>
</dbReference>
<dbReference type="PANTHER" id="PTHR43300">
    <property type="entry name" value="ACETYLTRANSFERASE"/>
    <property type="match status" value="1"/>
</dbReference>
<dbReference type="Pfam" id="PF08503">
    <property type="entry name" value="DapH_N"/>
    <property type="match status" value="1"/>
</dbReference>
<dbReference type="Pfam" id="PF00132">
    <property type="entry name" value="Hexapep"/>
    <property type="match status" value="1"/>
</dbReference>
<dbReference type="Pfam" id="PF14602">
    <property type="entry name" value="Hexapep_2"/>
    <property type="match status" value="1"/>
</dbReference>
<dbReference type="SUPFAM" id="SSF51161">
    <property type="entry name" value="Trimeric LpxA-like enzymes"/>
    <property type="match status" value="1"/>
</dbReference>
<dbReference type="PROSITE" id="PS00101">
    <property type="entry name" value="HEXAPEP_TRANSFERASES"/>
    <property type="match status" value="1"/>
</dbReference>
<protein>
    <recommendedName>
        <fullName evidence="1">2,3,4,5-tetrahydropyridine-2,6-dicarboxylate N-acetyltransferase</fullName>
        <ecNumber evidence="1">2.3.1.89</ecNumber>
    </recommendedName>
    <alternativeName>
        <fullName evidence="1">Tetrahydrodipicolinate N-acetyltransferase</fullName>
        <shortName evidence="1">THP acetyltransferase</shortName>
        <shortName evidence="1">Tetrahydropicolinate acetylase</shortName>
    </alternativeName>
</protein>
<keyword id="KW-0012">Acyltransferase</keyword>
<keyword id="KW-0028">Amino-acid biosynthesis</keyword>
<keyword id="KW-0220">Diaminopimelate biosynthesis</keyword>
<keyword id="KW-0457">Lysine biosynthesis</keyword>
<keyword id="KW-0677">Repeat</keyword>
<keyword id="KW-0808">Transferase</keyword>
<gene>
    <name evidence="1" type="primary">dapH</name>
    <name type="ordered locus">BCA_4086</name>
</gene>
<comment type="function">
    <text evidence="1">Catalyzes the transfer of an acetyl group from acetyl-CoA to tetrahydrodipicolinate.</text>
</comment>
<comment type="catalytic activity">
    <reaction evidence="1">
        <text>(S)-2,3,4,5-tetrahydrodipicolinate + acetyl-CoA + H2O = L-2-acetamido-6-oxoheptanedioate + CoA</text>
        <dbReference type="Rhea" id="RHEA:13085"/>
        <dbReference type="ChEBI" id="CHEBI:15377"/>
        <dbReference type="ChEBI" id="CHEBI:16845"/>
        <dbReference type="ChEBI" id="CHEBI:57287"/>
        <dbReference type="ChEBI" id="CHEBI:57288"/>
        <dbReference type="ChEBI" id="CHEBI:58117"/>
        <dbReference type="EC" id="2.3.1.89"/>
    </reaction>
</comment>
<comment type="pathway">
    <text evidence="1">Amino-acid biosynthesis; L-lysine biosynthesis via DAP pathway; LL-2,6-diaminopimelate from (S)-tetrahydrodipicolinate (acetylase route): step 1/3.</text>
</comment>
<comment type="similarity">
    <text evidence="1">Belongs to the transferase hexapeptide repeat family. DapH subfamily.</text>
</comment>
<name>DAPH_BACC3</name>
<reference key="1">
    <citation type="submission" date="2009-02" db="EMBL/GenBank/DDBJ databases">
        <title>Genome sequence of Bacillus cereus 03BB102.</title>
        <authorList>
            <person name="Dodson R.J."/>
            <person name="Jackson P."/>
            <person name="Munk A.C."/>
            <person name="Brettin T."/>
            <person name="Bruce D."/>
            <person name="Detter C."/>
            <person name="Tapia R."/>
            <person name="Han C."/>
            <person name="Sutton G."/>
            <person name="Sims D."/>
        </authorList>
    </citation>
    <scope>NUCLEOTIDE SEQUENCE [LARGE SCALE GENOMIC DNA]</scope>
    <source>
        <strain>03BB102</strain>
    </source>
</reference>
<organism>
    <name type="scientific">Bacillus cereus (strain 03BB102)</name>
    <dbReference type="NCBI Taxonomy" id="572264"/>
    <lineage>
        <taxon>Bacteria</taxon>
        <taxon>Bacillati</taxon>
        <taxon>Bacillota</taxon>
        <taxon>Bacilli</taxon>
        <taxon>Bacillales</taxon>
        <taxon>Bacillaceae</taxon>
        <taxon>Bacillus</taxon>
        <taxon>Bacillus cereus group</taxon>
    </lineage>
</organism>
<feature type="chain" id="PRO_1000187449" description="2,3,4,5-tetrahydropyridine-2,6-dicarboxylate N-acetyltransferase">
    <location>
        <begin position="1"/>
        <end position="240"/>
    </location>
</feature>